<accession>Q9DEB5</accession>
<protein>
    <recommendedName>
        <fullName>Frizzled-10-A</fullName>
        <shortName>Fz-10A</shortName>
        <shortName>Xfz10-A</shortName>
    </recommendedName>
</protein>
<reference key="1">
    <citation type="journal article" date="2000" name="Biochem. Biophys. Res. Commun.">
        <title>Isolation of Xenopus frizzled-10A and frizzled-10B genomic clones and their expression in adult tissues and embryos.</title>
        <authorList>
            <person name="Moriwaki J."/>
            <person name="Kajita E."/>
            <person name="Kirikoshi H."/>
            <person name="Koike J."/>
            <person name="Sagara N."/>
            <person name="Yasuhiko Y."/>
            <person name="Saitoh T."/>
            <person name="Hirai M."/>
            <person name="Katoh M."/>
            <person name="Shiokawa K."/>
        </authorList>
    </citation>
    <scope>NUCLEOTIDE SEQUENCE [MRNA]</scope>
    <source>
        <tissue>Liver</tissue>
    </source>
</reference>
<gene>
    <name type="primary">fzd10-a</name>
    <name type="synonym">fz10a</name>
</gene>
<organism>
    <name type="scientific">Xenopus laevis</name>
    <name type="common">African clawed frog</name>
    <dbReference type="NCBI Taxonomy" id="8355"/>
    <lineage>
        <taxon>Eukaryota</taxon>
        <taxon>Metazoa</taxon>
        <taxon>Chordata</taxon>
        <taxon>Craniata</taxon>
        <taxon>Vertebrata</taxon>
        <taxon>Euteleostomi</taxon>
        <taxon>Amphibia</taxon>
        <taxon>Batrachia</taxon>
        <taxon>Anura</taxon>
        <taxon>Pipoidea</taxon>
        <taxon>Pipidae</taxon>
        <taxon>Xenopodinae</taxon>
        <taxon>Xenopus</taxon>
        <taxon>Xenopus</taxon>
    </lineage>
</organism>
<name>FZ10A_XENLA</name>
<feature type="signal peptide" evidence="2">
    <location>
        <begin position="1"/>
        <end position="26"/>
    </location>
</feature>
<feature type="chain" id="PRO_0000013008" description="Frizzled-10-A">
    <location>
        <begin position="27"/>
        <end position="586"/>
    </location>
</feature>
<feature type="topological domain" description="Extracellular" evidence="2">
    <location>
        <begin position="27"/>
        <end position="230"/>
    </location>
</feature>
<feature type="transmembrane region" description="Helical; Name=1" evidence="2">
    <location>
        <begin position="231"/>
        <end position="251"/>
    </location>
</feature>
<feature type="topological domain" description="Cytoplasmic" evidence="2">
    <location>
        <begin position="252"/>
        <end position="267"/>
    </location>
</feature>
<feature type="transmembrane region" description="Helical; Name=2" evidence="2">
    <location>
        <begin position="268"/>
        <end position="288"/>
    </location>
</feature>
<feature type="topological domain" description="Extracellular" evidence="2">
    <location>
        <begin position="289"/>
        <end position="315"/>
    </location>
</feature>
<feature type="transmembrane region" description="Helical; Name=3" evidence="2">
    <location>
        <begin position="316"/>
        <end position="336"/>
    </location>
</feature>
<feature type="topological domain" description="Cytoplasmic" evidence="2">
    <location>
        <begin position="337"/>
        <end position="356"/>
    </location>
</feature>
<feature type="transmembrane region" description="Helical; Name=4" evidence="2">
    <location>
        <begin position="357"/>
        <end position="377"/>
    </location>
</feature>
<feature type="topological domain" description="Extracellular" evidence="2">
    <location>
        <begin position="378"/>
        <end position="401"/>
    </location>
</feature>
<feature type="transmembrane region" description="Helical; Name=5" evidence="2">
    <location>
        <begin position="402"/>
        <end position="422"/>
    </location>
</feature>
<feature type="topological domain" description="Cytoplasmic" evidence="2">
    <location>
        <begin position="423"/>
        <end position="448"/>
    </location>
</feature>
<feature type="transmembrane region" description="Helical; Name=6" evidence="2">
    <location>
        <begin position="449"/>
        <end position="469"/>
    </location>
</feature>
<feature type="topological domain" description="Extracellular" evidence="2">
    <location>
        <begin position="470"/>
        <end position="507"/>
    </location>
</feature>
<feature type="transmembrane region" description="Helical; Name=7" evidence="2">
    <location>
        <begin position="508"/>
        <end position="528"/>
    </location>
</feature>
<feature type="topological domain" description="Cytoplasmic" evidence="2">
    <location>
        <begin position="529"/>
        <end position="586"/>
    </location>
</feature>
<feature type="domain" description="FZ" evidence="3">
    <location>
        <begin position="35"/>
        <end position="156"/>
    </location>
</feature>
<feature type="region of interest" description="Disordered" evidence="4">
    <location>
        <begin position="161"/>
        <end position="199"/>
    </location>
</feature>
<feature type="region of interest" description="Disordered" evidence="4">
    <location>
        <begin position="563"/>
        <end position="586"/>
    </location>
</feature>
<feature type="short sequence motif" description="Lys-Thr-X-X-X-Trp motif, mediates interaction with the PDZ domain of Dvl family members" evidence="1">
    <location>
        <begin position="531"/>
        <end position="536"/>
    </location>
</feature>
<feature type="short sequence motif" description="PDZ-binding">
    <location>
        <begin position="584"/>
        <end position="586"/>
    </location>
</feature>
<feature type="compositionally biased region" description="Basic residues" evidence="4">
    <location>
        <begin position="564"/>
        <end position="573"/>
    </location>
</feature>
<feature type="glycosylation site" description="N-linked (GlcNAc...) asparagine" evidence="2">
    <location>
        <position position="54"/>
    </location>
</feature>
<feature type="glycosylation site" description="N-linked (GlcNAc...) asparagine" evidence="2">
    <location>
        <position position="159"/>
    </location>
</feature>
<feature type="disulfide bond" evidence="3">
    <location>
        <begin position="40"/>
        <end position="101"/>
    </location>
</feature>
<feature type="disulfide bond" evidence="3">
    <location>
        <begin position="48"/>
        <end position="94"/>
    </location>
</feature>
<feature type="disulfide bond" evidence="3">
    <location>
        <begin position="85"/>
        <end position="123"/>
    </location>
</feature>
<feature type="disulfide bond" evidence="3">
    <location>
        <begin position="112"/>
        <end position="153"/>
    </location>
</feature>
<feature type="disulfide bond" evidence="3">
    <location>
        <begin position="116"/>
        <end position="140"/>
    </location>
</feature>
<keyword id="KW-1003">Cell membrane</keyword>
<keyword id="KW-0217">Developmental protein</keyword>
<keyword id="KW-1015">Disulfide bond</keyword>
<keyword id="KW-0297">G-protein coupled receptor</keyword>
<keyword id="KW-0325">Glycoprotein</keyword>
<keyword id="KW-0472">Membrane</keyword>
<keyword id="KW-0675">Receptor</keyword>
<keyword id="KW-1185">Reference proteome</keyword>
<keyword id="KW-0732">Signal</keyword>
<keyword id="KW-0807">Transducer</keyword>
<keyword id="KW-0812">Transmembrane</keyword>
<keyword id="KW-1133">Transmembrane helix</keyword>
<keyword id="KW-0879">Wnt signaling pathway</keyword>
<sequence length="586" mass="65579">MDVSGVTGLLRGTALLLVLAAALCSAISSINPDRSGDGRCQAIEIPMCKDIGYNMTRMPNLMGHENQKEAAIQLHEFAPLVEYGCHSHLKFFLCSLYAPMCTEQVSTPIPACRVMCEQARLKCSPIMEQFNFKWPDSLDCSKLPNKNDPNYLCMEAPNNGTDETPRGSSMLPPIFRPQRPSSGHEIYPKDPTSRSSCENSGKFHHVEKSASCAPLCSSSVDVYWSKDDKKFAFIWIAIWSILCFFSSAFTVLTFLVDPLRFKYPERPIIFLSMCYCVYSVGYIIRLFAGADSIACDRDSGQLYVIQEGLESTGCTIVFLILYYFGMASSLWWVILTLTWFLAAGKKWGHEAIEANSSYFHLAAWAIPAVKTIMILVMRRVAGDELTGVCYVGSMDVNALTGFVLIPLACYLIIGTSFILSGFVALFHIRRVMKTGGENTDKLEKLMVRIGVFSVLYTVPATCVIACYFYERLNMDFWKILATQDKCKMDSQTKTLDCTMTSSIPAVEIFMVKIFMLLVVGITSGMWIWTSKTVQSWQNVFSKRLKKRNRSKPASVITSAGIYKKPQHPPKVHHGKYESALQSPTCV</sequence>
<dbReference type="EMBL" id="AB046534">
    <property type="protein sequence ID" value="BAB19017.1"/>
    <property type="molecule type" value="mRNA"/>
</dbReference>
<dbReference type="SMR" id="Q9DEB5"/>
<dbReference type="GlyCosmos" id="Q9DEB5">
    <property type="glycosylation" value="2 sites, No reported glycans"/>
</dbReference>
<dbReference type="GeneID" id="387604"/>
<dbReference type="KEGG" id="xla:387604"/>
<dbReference type="AGR" id="Xenbase:XB-GENE-865370"/>
<dbReference type="CTD" id="387604"/>
<dbReference type="Xenbase" id="XB-GENE-865370">
    <property type="gene designation" value="fzd10.L"/>
</dbReference>
<dbReference type="OrthoDB" id="5959102at2759"/>
<dbReference type="Proteomes" id="UP000186698">
    <property type="component" value="Chromosome 1L"/>
</dbReference>
<dbReference type="Bgee" id="387604">
    <property type="expression patterns" value="Expressed in liver and 15 other cell types or tissues"/>
</dbReference>
<dbReference type="GO" id="GO:0005615">
    <property type="term" value="C:extracellular space"/>
    <property type="evidence" value="ECO:0000318"/>
    <property type="project" value="GO_Central"/>
</dbReference>
<dbReference type="GO" id="GO:0005886">
    <property type="term" value="C:plasma membrane"/>
    <property type="evidence" value="ECO:0007669"/>
    <property type="project" value="UniProtKB-SubCell"/>
</dbReference>
<dbReference type="GO" id="GO:0004930">
    <property type="term" value="F:G protein-coupled receptor activity"/>
    <property type="evidence" value="ECO:0007669"/>
    <property type="project" value="UniProtKB-KW"/>
</dbReference>
<dbReference type="GO" id="GO:0017147">
    <property type="term" value="F:Wnt-protein binding"/>
    <property type="evidence" value="ECO:0000318"/>
    <property type="project" value="GO_Central"/>
</dbReference>
<dbReference type="GO" id="GO:0060070">
    <property type="term" value="P:canonical Wnt signaling pathway"/>
    <property type="evidence" value="ECO:0000318"/>
    <property type="project" value="GO_Central"/>
</dbReference>
<dbReference type="GO" id="GO:0035567">
    <property type="term" value="P:non-canonical Wnt signaling pathway"/>
    <property type="evidence" value="ECO:0000318"/>
    <property type="project" value="GO_Central"/>
</dbReference>
<dbReference type="CDD" id="cd15037">
    <property type="entry name" value="7tmF_FZD10"/>
    <property type="match status" value="1"/>
</dbReference>
<dbReference type="CDD" id="cd07462">
    <property type="entry name" value="CRD_FZ10"/>
    <property type="match status" value="1"/>
</dbReference>
<dbReference type="FunFam" id="1.10.2000.10:FF:000007">
    <property type="entry name" value="Frizzled class receptor 10"/>
    <property type="match status" value="1"/>
</dbReference>
<dbReference type="FunFam" id="1.20.1070.10:FF:000020">
    <property type="entry name" value="Frizzled class receptor 10"/>
    <property type="match status" value="1"/>
</dbReference>
<dbReference type="Gene3D" id="1.10.2000.10">
    <property type="entry name" value="Frizzled cysteine-rich domain"/>
    <property type="match status" value="1"/>
</dbReference>
<dbReference type="Gene3D" id="1.20.1070.10">
    <property type="entry name" value="Rhodopsin 7-helix transmembrane proteins"/>
    <property type="match status" value="1"/>
</dbReference>
<dbReference type="InterPro" id="IPR015526">
    <property type="entry name" value="Frizzled/SFRP"/>
</dbReference>
<dbReference type="InterPro" id="IPR000539">
    <property type="entry name" value="Frizzled/Smoothened_7TM"/>
</dbReference>
<dbReference type="InterPro" id="IPR020067">
    <property type="entry name" value="Frizzled_dom"/>
</dbReference>
<dbReference type="InterPro" id="IPR036790">
    <property type="entry name" value="Frizzled_dom_sf"/>
</dbReference>
<dbReference type="InterPro" id="IPR017981">
    <property type="entry name" value="GPCR_2-like_7TM"/>
</dbReference>
<dbReference type="PANTHER" id="PTHR11309">
    <property type="entry name" value="FRIZZLED"/>
    <property type="match status" value="1"/>
</dbReference>
<dbReference type="PANTHER" id="PTHR11309:SF86">
    <property type="entry name" value="FRIZZLED-10"/>
    <property type="match status" value="1"/>
</dbReference>
<dbReference type="Pfam" id="PF01534">
    <property type="entry name" value="Frizzled"/>
    <property type="match status" value="1"/>
</dbReference>
<dbReference type="Pfam" id="PF01392">
    <property type="entry name" value="Fz"/>
    <property type="match status" value="1"/>
</dbReference>
<dbReference type="PRINTS" id="PR00489">
    <property type="entry name" value="FRIZZLED"/>
</dbReference>
<dbReference type="SMART" id="SM00063">
    <property type="entry name" value="FRI"/>
    <property type="match status" value="1"/>
</dbReference>
<dbReference type="SMART" id="SM01330">
    <property type="entry name" value="Frizzled"/>
    <property type="match status" value="1"/>
</dbReference>
<dbReference type="SUPFAM" id="SSF63501">
    <property type="entry name" value="Frizzled cysteine-rich domain"/>
    <property type="match status" value="1"/>
</dbReference>
<dbReference type="PROSITE" id="PS50038">
    <property type="entry name" value="FZ"/>
    <property type="match status" value="1"/>
</dbReference>
<dbReference type="PROSITE" id="PS50261">
    <property type="entry name" value="G_PROTEIN_RECEP_F2_4"/>
    <property type="match status" value="1"/>
</dbReference>
<comment type="function">
    <text>Receptor for Wnt proteins. Most of frizzled receptors are coupled to the beta-catenin canonical signaling pathway, which leads to the activation of disheveled proteins, inhibition of GSK-3 kinase, nuclear accumulation of beta-catenin and activation of Wnt target genes. A second signaling pathway involving PKC and calcium fluxes has been seen for some family members, but it is not yet clear if it represents a distinct pathway or if it can be integrated in the canonical pathway, as PKC seems to be required for Wnt-mediated inactivation of GSK-3 kinase. Both pathways seem to involve interactions with G-proteins. May be involved in transduction and intercellular transmission of polarity information during tissue morphogenesis and/or in differentiated tissues. Activated by Wnt8. Could have an antagonizing activity in the morphogenesis during development.</text>
</comment>
<comment type="subcellular location">
    <subcellularLocation>
        <location evidence="5">Cell membrane</location>
        <topology evidence="5">Multi-pass membrane protein</topology>
    </subcellularLocation>
</comment>
<comment type="tissue specificity">
    <text>Expressed in liver, lung, brain, testis, stomach, kidney, eye, skeletal muscle and skin.</text>
</comment>
<comment type="developmental stage">
    <text>Expressed from blastula stage, peak expression at late gastrula stage. Expression localizes in neural fold at neurula stage; in the dorsal region of midbrain, hindbrain and spinal cord at tadpole stage.</text>
</comment>
<comment type="domain">
    <text evidence="1">Lys-Thr-X-X-X-Trp motif interacts with the PDZ domain of Dvl (Disheveled) family members and is involved in the activation of the Wnt/beta-catenin signaling pathway.</text>
</comment>
<comment type="domain">
    <text evidence="1">The FZ domain is involved in binding with Wnt ligands.</text>
</comment>
<comment type="similarity">
    <text evidence="5">Belongs to the G-protein coupled receptor Fz/Smo family.</text>
</comment>
<evidence type="ECO:0000250" key="1"/>
<evidence type="ECO:0000255" key="2"/>
<evidence type="ECO:0000255" key="3">
    <source>
        <dbReference type="PROSITE-ProRule" id="PRU00090"/>
    </source>
</evidence>
<evidence type="ECO:0000256" key="4">
    <source>
        <dbReference type="SAM" id="MobiDB-lite"/>
    </source>
</evidence>
<evidence type="ECO:0000305" key="5"/>
<proteinExistence type="evidence at transcript level"/>